<reference key="1">
    <citation type="journal article" date="2006" name="Mol. Microbiol.">
        <title>Role of pathogenicity island-associated integrases in the genome plasticity of uropathogenic Escherichia coli strain 536.</title>
        <authorList>
            <person name="Hochhut B."/>
            <person name="Wilde C."/>
            <person name="Balling G."/>
            <person name="Middendorf B."/>
            <person name="Dobrindt U."/>
            <person name="Brzuszkiewicz E."/>
            <person name="Gottschalk G."/>
            <person name="Carniel E."/>
            <person name="Hacker J."/>
        </authorList>
    </citation>
    <scope>NUCLEOTIDE SEQUENCE [LARGE SCALE GENOMIC DNA]</scope>
    <source>
        <strain>536 / UPEC</strain>
    </source>
</reference>
<gene>
    <name evidence="1" type="primary">nanE</name>
    <name type="ordered locus">ECP_3306</name>
</gene>
<accession>Q0TCP3</accession>
<feature type="chain" id="PRO_0000301472" description="Putative N-acetylmannosamine-6-phosphate 2-epimerase">
    <location>
        <begin position="1"/>
        <end position="229"/>
    </location>
</feature>
<protein>
    <recommendedName>
        <fullName evidence="1">Putative N-acetylmannosamine-6-phosphate 2-epimerase</fullName>
        <ecNumber evidence="1">5.1.3.9</ecNumber>
    </recommendedName>
    <alternativeName>
        <fullName evidence="1">ManNAc-6-P epimerase</fullName>
    </alternativeName>
</protein>
<evidence type="ECO:0000255" key="1">
    <source>
        <dbReference type="HAMAP-Rule" id="MF_01235"/>
    </source>
</evidence>
<keyword id="KW-0119">Carbohydrate metabolism</keyword>
<keyword id="KW-0413">Isomerase</keyword>
<comment type="function">
    <text evidence="1">Converts N-acetylmannosamine-6-phosphate (ManNAc-6-P) to N-acetylglucosamine-6-phosphate (GlcNAc-6-P).</text>
</comment>
<comment type="catalytic activity">
    <reaction evidence="1">
        <text>an N-acyl-D-glucosamine 6-phosphate = an N-acyl-D-mannosamine 6-phosphate</text>
        <dbReference type="Rhea" id="RHEA:23932"/>
        <dbReference type="ChEBI" id="CHEBI:57599"/>
        <dbReference type="ChEBI" id="CHEBI:57666"/>
        <dbReference type="EC" id="5.1.3.9"/>
    </reaction>
</comment>
<comment type="pathway">
    <text evidence="1">Amino-sugar metabolism; N-acetylneuraminate degradation; D-fructose 6-phosphate from N-acetylneuraminate: step 3/5.</text>
</comment>
<comment type="similarity">
    <text evidence="1">Belongs to the NanE family.</text>
</comment>
<proteinExistence type="inferred from homology"/>
<name>NANE_ECOL5</name>
<sequence length="229" mass="24074">MSLLAQLDQKIAANGGLIVSCQPVPDSPLDKPEIVAAMALAAEQAGAVAIRIEGVANLQATRAVVSVPIIGIVKRDLEDSPVRITAYIEDVDALAQAGADIIAIDGTDRPRPVPVETLLARIHHHGLLAMTDCSTPEDGLACQKLGAEIIGTTLSGYTTPETPEEPDLALVKTLSDAGCRVIAEGRYNTPAQAADAMRHGAWAVTVGSAITRLEHICQWYNTAMKKAVL</sequence>
<dbReference type="EC" id="5.1.3.9" evidence="1"/>
<dbReference type="EMBL" id="CP000247">
    <property type="protein sequence ID" value="ABG71286.1"/>
    <property type="molecule type" value="Genomic_DNA"/>
</dbReference>
<dbReference type="RefSeq" id="WP_000054239.1">
    <property type="nucleotide sequence ID" value="NC_008253.1"/>
</dbReference>
<dbReference type="SMR" id="Q0TCP3"/>
<dbReference type="KEGG" id="ecp:ECP_3306"/>
<dbReference type="HOGENOM" id="CLU_086300_0_0_6"/>
<dbReference type="UniPathway" id="UPA00629">
    <property type="reaction ID" value="UER00682"/>
</dbReference>
<dbReference type="Proteomes" id="UP000009182">
    <property type="component" value="Chromosome"/>
</dbReference>
<dbReference type="GO" id="GO:0005829">
    <property type="term" value="C:cytosol"/>
    <property type="evidence" value="ECO:0007669"/>
    <property type="project" value="TreeGrafter"/>
</dbReference>
<dbReference type="GO" id="GO:0047465">
    <property type="term" value="F:N-acylglucosamine-6-phosphate 2-epimerase activity"/>
    <property type="evidence" value="ECO:0007669"/>
    <property type="project" value="UniProtKB-EC"/>
</dbReference>
<dbReference type="GO" id="GO:0005975">
    <property type="term" value="P:carbohydrate metabolic process"/>
    <property type="evidence" value="ECO:0007669"/>
    <property type="project" value="UniProtKB-UniRule"/>
</dbReference>
<dbReference type="GO" id="GO:0006053">
    <property type="term" value="P:N-acetylmannosamine catabolic process"/>
    <property type="evidence" value="ECO:0007669"/>
    <property type="project" value="TreeGrafter"/>
</dbReference>
<dbReference type="GO" id="GO:0019262">
    <property type="term" value="P:N-acetylneuraminate catabolic process"/>
    <property type="evidence" value="ECO:0007669"/>
    <property type="project" value="UniProtKB-UniRule"/>
</dbReference>
<dbReference type="CDD" id="cd04729">
    <property type="entry name" value="NanE"/>
    <property type="match status" value="1"/>
</dbReference>
<dbReference type="FunFam" id="3.20.20.70:FF:000035">
    <property type="entry name" value="Putative N-acetylmannosamine-6-phosphate 2-epimerase"/>
    <property type="match status" value="1"/>
</dbReference>
<dbReference type="Gene3D" id="3.20.20.70">
    <property type="entry name" value="Aldolase class I"/>
    <property type="match status" value="1"/>
</dbReference>
<dbReference type="HAMAP" id="MF_01235">
    <property type="entry name" value="ManNAc6P_epimer"/>
    <property type="match status" value="1"/>
</dbReference>
<dbReference type="InterPro" id="IPR013785">
    <property type="entry name" value="Aldolase_TIM"/>
</dbReference>
<dbReference type="InterPro" id="IPR007260">
    <property type="entry name" value="NanE"/>
</dbReference>
<dbReference type="InterPro" id="IPR011060">
    <property type="entry name" value="RibuloseP-bd_barrel"/>
</dbReference>
<dbReference type="NCBIfam" id="NF002231">
    <property type="entry name" value="PRK01130.1"/>
    <property type="match status" value="1"/>
</dbReference>
<dbReference type="PANTHER" id="PTHR36204">
    <property type="entry name" value="N-ACETYLMANNOSAMINE-6-PHOSPHATE 2-EPIMERASE-RELATED"/>
    <property type="match status" value="1"/>
</dbReference>
<dbReference type="PANTHER" id="PTHR36204:SF1">
    <property type="entry name" value="N-ACETYLMANNOSAMINE-6-PHOSPHATE 2-EPIMERASE-RELATED"/>
    <property type="match status" value="1"/>
</dbReference>
<dbReference type="Pfam" id="PF04131">
    <property type="entry name" value="NanE"/>
    <property type="match status" value="1"/>
</dbReference>
<dbReference type="SUPFAM" id="SSF51366">
    <property type="entry name" value="Ribulose-phoshate binding barrel"/>
    <property type="match status" value="1"/>
</dbReference>
<organism>
    <name type="scientific">Escherichia coli O6:K15:H31 (strain 536 / UPEC)</name>
    <dbReference type="NCBI Taxonomy" id="362663"/>
    <lineage>
        <taxon>Bacteria</taxon>
        <taxon>Pseudomonadati</taxon>
        <taxon>Pseudomonadota</taxon>
        <taxon>Gammaproteobacteria</taxon>
        <taxon>Enterobacterales</taxon>
        <taxon>Enterobacteriaceae</taxon>
        <taxon>Escherichia</taxon>
    </lineage>
</organism>